<name>AAEX_ERWT9</name>
<reference key="1">
    <citation type="journal article" date="2008" name="Environ. Microbiol.">
        <title>The genome of Erwinia tasmaniensis strain Et1/99, a non-pathogenic bacterium in the genus Erwinia.</title>
        <authorList>
            <person name="Kube M."/>
            <person name="Migdoll A.M."/>
            <person name="Mueller I."/>
            <person name="Kuhl H."/>
            <person name="Beck A."/>
            <person name="Reinhardt R."/>
            <person name="Geider K."/>
        </authorList>
    </citation>
    <scope>NUCLEOTIDE SEQUENCE [LARGE SCALE GENOMIC DNA]</scope>
    <source>
        <strain>DSM 17950 / CFBP 7177 / CIP 109463 / NCPPB 4357 / Et1/99</strain>
    </source>
</reference>
<dbReference type="EMBL" id="CU468135">
    <property type="protein sequence ID" value="CAO95338.1"/>
    <property type="molecule type" value="Genomic_DNA"/>
</dbReference>
<dbReference type="RefSeq" id="WP_012440056.1">
    <property type="nucleotide sequence ID" value="NC_010694.1"/>
</dbReference>
<dbReference type="SMR" id="B2VGW0"/>
<dbReference type="STRING" id="465817.ETA_02920"/>
<dbReference type="KEGG" id="eta:ETA_02920"/>
<dbReference type="eggNOG" id="ENOG5032YJX">
    <property type="taxonomic scope" value="Bacteria"/>
</dbReference>
<dbReference type="HOGENOM" id="CLU_188292_0_0_6"/>
<dbReference type="OrthoDB" id="6080293at2"/>
<dbReference type="Proteomes" id="UP000001726">
    <property type="component" value="Chromosome"/>
</dbReference>
<dbReference type="GO" id="GO:0005886">
    <property type="term" value="C:plasma membrane"/>
    <property type="evidence" value="ECO:0007669"/>
    <property type="project" value="UniProtKB-SubCell"/>
</dbReference>
<dbReference type="HAMAP" id="MF_01546">
    <property type="entry name" value="AaeX"/>
    <property type="match status" value="1"/>
</dbReference>
<dbReference type="InterPro" id="IPR012451">
    <property type="entry name" value="DUF1656"/>
</dbReference>
<dbReference type="NCBIfam" id="NF008615">
    <property type="entry name" value="PRK11594.1"/>
    <property type="match status" value="1"/>
</dbReference>
<dbReference type="Pfam" id="PF07869">
    <property type="entry name" value="DUF1656"/>
    <property type="match status" value="1"/>
</dbReference>
<accession>B2VGW0</accession>
<sequence length="67" mass="7741">MSVLPVVVVFGMSFPPIFIEIIVSLMLFWLIRRAITPTGLYDLVWHPALFNTALYCCLFYVVSRLFV</sequence>
<organism>
    <name type="scientific">Erwinia tasmaniensis (strain DSM 17950 / CFBP 7177 / CIP 109463 / NCPPB 4357 / Et1/99)</name>
    <dbReference type="NCBI Taxonomy" id="465817"/>
    <lineage>
        <taxon>Bacteria</taxon>
        <taxon>Pseudomonadati</taxon>
        <taxon>Pseudomonadota</taxon>
        <taxon>Gammaproteobacteria</taxon>
        <taxon>Enterobacterales</taxon>
        <taxon>Erwiniaceae</taxon>
        <taxon>Erwinia</taxon>
    </lineage>
</organism>
<gene>
    <name evidence="1" type="primary">aaeX</name>
    <name type="ordered locus">ETA_02920</name>
</gene>
<keyword id="KW-1003">Cell membrane</keyword>
<keyword id="KW-0472">Membrane</keyword>
<keyword id="KW-1185">Reference proteome</keyword>
<keyword id="KW-0812">Transmembrane</keyword>
<keyword id="KW-1133">Transmembrane helix</keyword>
<proteinExistence type="inferred from homology"/>
<feature type="chain" id="PRO_0000414010" description="Protein AaeX">
    <location>
        <begin position="1"/>
        <end position="67"/>
    </location>
</feature>
<feature type="transmembrane region" description="Helical" evidence="1">
    <location>
        <begin position="3"/>
        <end position="23"/>
    </location>
</feature>
<feature type="transmembrane region" description="Helical" evidence="1">
    <location>
        <begin position="43"/>
        <end position="63"/>
    </location>
</feature>
<protein>
    <recommendedName>
        <fullName evidence="1">Protein AaeX</fullName>
    </recommendedName>
</protein>
<evidence type="ECO:0000255" key="1">
    <source>
        <dbReference type="HAMAP-Rule" id="MF_01546"/>
    </source>
</evidence>
<comment type="subcellular location">
    <subcellularLocation>
        <location evidence="1">Cell membrane</location>
        <topology evidence="1">Multi-pass membrane protein</topology>
    </subcellularLocation>
</comment>
<comment type="similarity">
    <text evidence="1">Belongs to the AaeX family.</text>
</comment>